<reference key="1">
    <citation type="journal article" date="2004" name="Proc. Natl. Acad. Sci. U.S.A.">
        <title>Complete genomes of two clinical Staphylococcus aureus strains: evidence for the rapid evolution of virulence and drug resistance.</title>
        <authorList>
            <person name="Holden M.T.G."/>
            <person name="Feil E.J."/>
            <person name="Lindsay J.A."/>
            <person name="Peacock S.J."/>
            <person name="Day N.P.J."/>
            <person name="Enright M.C."/>
            <person name="Foster T.J."/>
            <person name="Moore C.E."/>
            <person name="Hurst L."/>
            <person name="Atkin R."/>
            <person name="Barron A."/>
            <person name="Bason N."/>
            <person name="Bentley S.D."/>
            <person name="Chillingworth C."/>
            <person name="Chillingworth T."/>
            <person name="Churcher C."/>
            <person name="Clark L."/>
            <person name="Corton C."/>
            <person name="Cronin A."/>
            <person name="Doggett J."/>
            <person name="Dowd L."/>
            <person name="Feltwell T."/>
            <person name="Hance Z."/>
            <person name="Harris B."/>
            <person name="Hauser H."/>
            <person name="Holroyd S."/>
            <person name="Jagels K."/>
            <person name="James K.D."/>
            <person name="Lennard N."/>
            <person name="Line A."/>
            <person name="Mayes R."/>
            <person name="Moule S."/>
            <person name="Mungall K."/>
            <person name="Ormond D."/>
            <person name="Quail M.A."/>
            <person name="Rabbinowitsch E."/>
            <person name="Rutherford K.M."/>
            <person name="Sanders M."/>
            <person name="Sharp S."/>
            <person name="Simmonds M."/>
            <person name="Stevens K."/>
            <person name="Whitehead S."/>
            <person name="Barrell B.G."/>
            <person name="Spratt B.G."/>
            <person name="Parkhill J."/>
        </authorList>
    </citation>
    <scope>NUCLEOTIDE SEQUENCE [LARGE SCALE GENOMIC DNA]</scope>
    <source>
        <strain>MRSA252</strain>
    </source>
</reference>
<sequence>MNRQQNDLILQFAAVIIFFMVMVFGFSLFLAGHYTPGGGFVGGLLFASSLVIITIAFDIETMRKIFPLDFKILIGIGLVFCIATPIASWFLGKNFFTHVTFDIPLFILEPVHMTTAVFFDFGVLCAVVGTVMTIIISIGENE</sequence>
<evidence type="ECO:0000250" key="1"/>
<evidence type="ECO:0000255" key="2"/>
<evidence type="ECO:0000305" key="3"/>
<keyword id="KW-0050">Antiport</keyword>
<keyword id="KW-1003">Cell membrane</keyword>
<keyword id="KW-0375">Hydrogen ion transport</keyword>
<keyword id="KW-0406">Ion transport</keyword>
<keyword id="KW-0472">Membrane</keyword>
<keyword id="KW-0915">Sodium</keyword>
<keyword id="KW-0739">Sodium transport</keyword>
<keyword id="KW-0812">Transmembrane</keyword>
<keyword id="KW-1133">Transmembrane helix</keyword>
<keyword id="KW-0813">Transport</keyword>
<proteinExistence type="inferred from homology"/>
<feature type="chain" id="PRO_0000088859" description="Na(+)/H(+) antiporter subunit B1">
    <location>
        <begin position="1"/>
        <end position="142"/>
    </location>
</feature>
<feature type="transmembrane region" description="Helical" evidence="2">
    <location>
        <begin position="9"/>
        <end position="31"/>
    </location>
</feature>
<feature type="transmembrane region" description="Helical" evidence="2">
    <location>
        <begin position="35"/>
        <end position="57"/>
    </location>
</feature>
<feature type="transmembrane region" description="Helical" evidence="2">
    <location>
        <begin position="70"/>
        <end position="92"/>
    </location>
</feature>
<feature type="transmembrane region" description="Helical" evidence="2">
    <location>
        <begin position="116"/>
        <end position="138"/>
    </location>
</feature>
<comment type="function">
    <text evidence="1">Mnh complex is a Na(+)/H(+) antiporter involved in Na(+) excretion.</text>
</comment>
<comment type="subunit">
    <text evidence="1">May form a heterooligomeric complex that consists of seven subunits: mnhA1, mnhB1, mnhC1, mnhD1, mnhE1, mnhF1 and mnhG1.</text>
</comment>
<comment type="subcellular location">
    <subcellularLocation>
        <location evidence="3">Cell membrane</location>
        <topology evidence="3">Multi-pass membrane protein</topology>
    </subcellularLocation>
</comment>
<comment type="similarity">
    <text evidence="3">Belongs to the CPA3 antiporters (TC 2.A.63) subunit B family.</text>
</comment>
<protein>
    <recommendedName>
        <fullName>Na(+)/H(+) antiporter subunit B1</fullName>
    </recommendedName>
    <alternativeName>
        <fullName>Mnh complex subunit B1</fullName>
    </alternativeName>
</protein>
<accession>Q6GID7</accession>
<dbReference type="EMBL" id="BX571856">
    <property type="protein sequence ID" value="CAG39919.1"/>
    <property type="molecule type" value="Genomic_DNA"/>
</dbReference>
<dbReference type="RefSeq" id="WP_001081626.1">
    <property type="nucleotide sequence ID" value="NC_002952.2"/>
</dbReference>
<dbReference type="SMR" id="Q6GID7"/>
<dbReference type="GeneID" id="66839149"/>
<dbReference type="KEGG" id="sar:SAR0913"/>
<dbReference type="HOGENOM" id="CLU_101659_1_1_9"/>
<dbReference type="Proteomes" id="UP000000596">
    <property type="component" value="Chromosome"/>
</dbReference>
<dbReference type="GO" id="GO:0005886">
    <property type="term" value="C:plasma membrane"/>
    <property type="evidence" value="ECO:0007669"/>
    <property type="project" value="UniProtKB-SubCell"/>
</dbReference>
<dbReference type="GO" id="GO:0015297">
    <property type="term" value="F:antiporter activity"/>
    <property type="evidence" value="ECO:0007669"/>
    <property type="project" value="UniProtKB-KW"/>
</dbReference>
<dbReference type="GO" id="GO:0008324">
    <property type="term" value="F:monoatomic cation transmembrane transporter activity"/>
    <property type="evidence" value="ECO:0007669"/>
    <property type="project" value="InterPro"/>
</dbReference>
<dbReference type="GO" id="GO:1902600">
    <property type="term" value="P:proton transmembrane transport"/>
    <property type="evidence" value="ECO:0007669"/>
    <property type="project" value="UniProtKB-KW"/>
</dbReference>
<dbReference type="GO" id="GO:0006814">
    <property type="term" value="P:sodium ion transport"/>
    <property type="evidence" value="ECO:0007669"/>
    <property type="project" value="UniProtKB-KW"/>
</dbReference>
<dbReference type="InterPro" id="IPR050622">
    <property type="entry name" value="CPA3_antiporter_subunitB"/>
</dbReference>
<dbReference type="InterPro" id="IPR005281">
    <property type="entry name" value="CPA3_sub_B"/>
</dbReference>
<dbReference type="InterPro" id="IPR007182">
    <property type="entry name" value="MnhB"/>
</dbReference>
<dbReference type="NCBIfam" id="TIGR00943">
    <property type="entry name" value="2a6301s02"/>
    <property type="match status" value="1"/>
</dbReference>
<dbReference type="NCBIfam" id="NF009223">
    <property type="entry name" value="PRK12573.1"/>
    <property type="match status" value="1"/>
</dbReference>
<dbReference type="PANTHER" id="PTHR33932">
    <property type="entry name" value="NA(+)/H(+) ANTIPORTER SUBUNIT B"/>
    <property type="match status" value="1"/>
</dbReference>
<dbReference type="PANTHER" id="PTHR33932:SF4">
    <property type="entry name" value="NA(+)_H(+) ANTIPORTER SUBUNIT B"/>
    <property type="match status" value="1"/>
</dbReference>
<dbReference type="Pfam" id="PF04039">
    <property type="entry name" value="MnhB"/>
    <property type="match status" value="1"/>
</dbReference>
<organism>
    <name type="scientific">Staphylococcus aureus (strain MRSA252)</name>
    <dbReference type="NCBI Taxonomy" id="282458"/>
    <lineage>
        <taxon>Bacteria</taxon>
        <taxon>Bacillati</taxon>
        <taxon>Bacillota</taxon>
        <taxon>Bacilli</taxon>
        <taxon>Bacillales</taxon>
        <taxon>Staphylococcaceae</taxon>
        <taxon>Staphylococcus</taxon>
    </lineage>
</organism>
<name>MNHB1_STAAR</name>
<gene>
    <name type="primary">mnhB1</name>
    <name type="ordered locus">SAR0913</name>
</gene>